<dbReference type="EMBL" id="U60190">
    <property type="protein sequence ID" value="AAB03412.1"/>
    <property type="molecule type" value="Genomic_RNA"/>
</dbReference>
<dbReference type="SMR" id="Q64919"/>
<dbReference type="InterPro" id="IPR002565">
    <property type="entry name" value="Orbi_NS3"/>
</dbReference>
<dbReference type="Pfam" id="PF01616">
    <property type="entry name" value="Orbi_NS3"/>
    <property type="match status" value="1"/>
</dbReference>
<proteinExistence type="inferred from homology"/>
<gene>
    <name type="primary">Segment-10</name>
</gene>
<evidence type="ECO:0000305" key="1"/>
<sequence length="217" mass="23528">MSLATIAENYMMHNETQRAIVPYVPPPYAYANAPTLGGQAGEMESMSLGILNQAMSSTTGASGALKDEKAAFGAMAEALRDPEPIRQIKKHVGLRTLKHLKIELASMRRRYAILRVVILMSGCVTMATSMAGGLTIIDKDIYQDLNGDGWLSKTIHGLNLLCTTMLLAAGKISDKIQEEISRTKRDIAKIESYVSAASMSWSGDTSVPLKEVKYGDS</sequence>
<name>VNS3_AHSV7</name>
<organismHost>
    <name type="scientific">Camelus dromedarius</name>
    <name type="common">Dromedary</name>
    <name type="synonym">Arabian camel</name>
    <dbReference type="NCBI Taxonomy" id="9838"/>
</organismHost>
<organismHost>
    <name type="scientific">Canis lupus familiaris</name>
    <name type="common">Dog</name>
    <name type="synonym">Canis familiaris</name>
    <dbReference type="NCBI Taxonomy" id="9615"/>
</organismHost>
<organismHost>
    <name type="scientific">Equus asinus</name>
    <name type="common">Donkey</name>
    <name type="synonym">Equus africanus asinus</name>
    <dbReference type="NCBI Taxonomy" id="9793"/>
</organismHost>
<organismHost>
    <name type="scientific">Equus caballus</name>
    <name type="common">Horse</name>
    <dbReference type="NCBI Taxonomy" id="9796"/>
</organismHost>
<organismHost>
    <name type="scientific">Equus hemionus</name>
    <name type="common">Onager</name>
    <name type="synonym">Asian wild ass</name>
    <dbReference type="NCBI Taxonomy" id="9794"/>
</organismHost>
<organismHost>
    <name type="scientific">Equus quagga burchellii</name>
    <name type="common">Burchell's zebra</name>
    <name type="synonym">Equus burchelli</name>
    <dbReference type="NCBI Taxonomy" id="89252"/>
</organismHost>
<organismHost>
    <name type="scientific">Loxodonta africana</name>
    <name type="common">African elephant</name>
    <dbReference type="NCBI Taxonomy" id="9785"/>
</organismHost>
<comment type="function">
    <text>May play a role in the release of virions from infected cells.</text>
</comment>
<comment type="similarity">
    <text evidence="1">Belongs to the orbivirus NS3 family.</text>
</comment>
<feature type="chain" id="PRO_0000040648" description="Non-structural protein NS3">
    <location>
        <begin position="1"/>
        <end position="217"/>
    </location>
</feature>
<feature type="chain" id="PRO_0000040649" description="Non-structural protein NS3A">
    <location>
        <begin position="11"/>
        <end position="217"/>
    </location>
</feature>
<reference key="1">
    <citation type="submission" date="1996-06" db="EMBL/GenBank/DDBJ databases">
        <authorList>
            <person name="Zientara S."/>
            <person name="Sailleau C."/>
            <person name="Moulay S."/>
        </authorList>
    </citation>
    <scope>NUCLEOTIDE SEQUENCE [GENOMIC RNA]</scope>
</reference>
<protein>
    <recommendedName>
        <fullName>Non-structural protein NS3</fullName>
    </recommendedName>
    <component>
        <recommendedName>
            <fullName>Non-structural protein NS3A</fullName>
        </recommendedName>
    </component>
</protein>
<organism>
    <name type="scientific">African horse sickness virus 7</name>
    <name type="common">AHSV-7</name>
    <dbReference type="NCBI Taxonomy" id="86061"/>
    <lineage>
        <taxon>Viruses</taxon>
        <taxon>Riboviria</taxon>
        <taxon>Orthornavirae</taxon>
        <taxon>Duplornaviricota</taxon>
        <taxon>Resentoviricetes</taxon>
        <taxon>Reovirales</taxon>
        <taxon>Sedoreoviridae</taxon>
        <taxon>Orbivirus</taxon>
        <taxon>African horse sickness virus</taxon>
    </lineage>
</organism>
<accession>Q64919</accession>